<organism>
    <name type="scientific">Homo sapiens</name>
    <name type="common">Human</name>
    <dbReference type="NCBI Taxonomy" id="9606"/>
    <lineage>
        <taxon>Eukaryota</taxon>
        <taxon>Metazoa</taxon>
        <taxon>Chordata</taxon>
        <taxon>Craniata</taxon>
        <taxon>Vertebrata</taxon>
        <taxon>Euteleostomi</taxon>
        <taxon>Mammalia</taxon>
        <taxon>Eutheria</taxon>
        <taxon>Euarchontoglires</taxon>
        <taxon>Primates</taxon>
        <taxon>Haplorrhini</taxon>
        <taxon>Catarrhini</taxon>
        <taxon>Hominidae</taxon>
        <taxon>Homo</taxon>
    </lineage>
</organism>
<name>KCNV1_HUMAN</name>
<feature type="chain" id="PRO_0000308350" description="Potassium voltage-gated channel subfamily V member 1">
    <location>
        <begin position="1"/>
        <end position="500"/>
    </location>
</feature>
<feature type="topological domain" description="Cytoplasmic" evidence="2">
    <location>
        <begin position="1"/>
        <end position="210"/>
    </location>
</feature>
<feature type="transmembrane region" description="Helical; Name=Segment S1" evidence="2">
    <location>
        <begin position="211"/>
        <end position="231"/>
    </location>
</feature>
<feature type="topological domain" description="Extracellular" evidence="2">
    <location>
        <begin position="232"/>
        <end position="238"/>
    </location>
</feature>
<feature type="transmembrane region" description="Helical; Name=Segment S2" evidence="2">
    <location>
        <begin position="239"/>
        <end position="259"/>
    </location>
</feature>
<feature type="topological domain" description="Cytoplasmic" evidence="2">
    <location>
        <begin position="260"/>
        <end position="276"/>
    </location>
</feature>
<feature type="transmembrane region" description="Helical; Name=Segment S3" evidence="2">
    <location>
        <begin position="277"/>
        <end position="297"/>
    </location>
</feature>
<feature type="topological domain" description="Extracellular" evidence="2">
    <location>
        <begin position="298"/>
        <end position="309"/>
    </location>
</feature>
<feature type="transmembrane region" description="Helical; Voltage-sensor; Name=Segment S4" evidence="2">
    <location>
        <begin position="310"/>
        <end position="331"/>
    </location>
</feature>
<feature type="topological domain" description="Cytoplasmic" evidence="2">
    <location>
        <begin position="332"/>
        <end position="345"/>
    </location>
</feature>
<feature type="transmembrane region" description="Helical; Name=Segment S5" evidence="2">
    <location>
        <begin position="346"/>
        <end position="366"/>
    </location>
</feature>
<feature type="transmembrane region" description="Helical; Name=Segment S6" evidence="2">
    <location>
        <begin position="407"/>
        <end position="427"/>
    </location>
</feature>
<feature type="topological domain" description="Cytoplasmic" evidence="2">
    <location>
        <begin position="428"/>
        <end position="500"/>
    </location>
</feature>
<feature type="region of interest" description="Disordered" evidence="3">
    <location>
        <begin position="168"/>
        <end position="189"/>
    </location>
</feature>
<feature type="short sequence motif" description="Selectivity filter" evidence="1">
    <location>
        <begin position="392"/>
        <end position="397"/>
    </location>
</feature>
<feature type="compositionally biased region" description="Basic and acidic residues" evidence="3">
    <location>
        <begin position="168"/>
        <end position="181"/>
    </location>
</feature>
<feature type="sequence variant" id="VAR_036804" description="In dbSNP:rs17852611." evidence="5">
    <original>D</original>
    <variation>G</variation>
    <location>
        <position position="22"/>
    </location>
</feature>
<gene>
    <name type="primary">KCNV1</name>
</gene>
<dbReference type="EMBL" id="AB032013">
    <property type="protein sequence ID" value="BAA92316.1"/>
    <property type="molecule type" value="Genomic_DNA"/>
</dbReference>
<dbReference type="EMBL" id="AF167082">
    <property type="protein sequence ID" value="AAD48031.2"/>
    <property type="molecule type" value="mRNA"/>
</dbReference>
<dbReference type="EMBL" id="BC028739">
    <property type="protein sequence ID" value="AAH28739.1"/>
    <property type="molecule type" value="mRNA"/>
</dbReference>
<dbReference type="CCDS" id="CCDS6314.1"/>
<dbReference type="RefSeq" id="NP_055194.1">
    <property type="nucleotide sequence ID" value="NM_014379.4"/>
</dbReference>
<dbReference type="SMR" id="Q6PIU1"/>
<dbReference type="BioGRID" id="117954">
    <property type="interactions" value="36"/>
</dbReference>
<dbReference type="CORUM" id="Q6PIU1"/>
<dbReference type="FunCoup" id="Q6PIU1">
    <property type="interactions" value="32"/>
</dbReference>
<dbReference type="IntAct" id="Q6PIU1">
    <property type="interactions" value="4"/>
</dbReference>
<dbReference type="MINT" id="Q6PIU1"/>
<dbReference type="STRING" id="9606.ENSP00000435954"/>
<dbReference type="ChEMBL" id="CHEMBL2362996"/>
<dbReference type="DrugBank" id="DB00228">
    <property type="generic name" value="Enflurane"/>
</dbReference>
<dbReference type="DrugBank" id="DB01110">
    <property type="generic name" value="Miconazole"/>
</dbReference>
<dbReference type="DrugBank" id="DB01069">
    <property type="generic name" value="Promethazine"/>
</dbReference>
<dbReference type="DrugCentral" id="Q6PIU1"/>
<dbReference type="PhosphoSitePlus" id="Q6PIU1"/>
<dbReference type="BioMuta" id="KCNV1"/>
<dbReference type="DMDM" id="160013825"/>
<dbReference type="jPOST" id="Q6PIU1"/>
<dbReference type="MassIVE" id="Q6PIU1"/>
<dbReference type="PaxDb" id="9606-ENSP00000435954"/>
<dbReference type="PeptideAtlas" id="Q6PIU1"/>
<dbReference type="ProteomicsDB" id="67176"/>
<dbReference type="Antibodypedia" id="26632">
    <property type="antibodies" value="128 antibodies from 20 providers"/>
</dbReference>
<dbReference type="DNASU" id="27012"/>
<dbReference type="Ensembl" id="ENST00000297404.1">
    <property type="protein sequence ID" value="ENSP00000297404.1"/>
    <property type="gene ID" value="ENSG00000164794.9"/>
</dbReference>
<dbReference type="Ensembl" id="ENST00000524391.6">
    <property type="protein sequence ID" value="ENSP00000435954.1"/>
    <property type="gene ID" value="ENSG00000164794.9"/>
</dbReference>
<dbReference type="GeneID" id="27012"/>
<dbReference type="KEGG" id="hsa:27012"/>
<dbReference type="MANE-Select" id="ENST00000524391.6">
    <property type="protein sequence ID" value="ENSP00000435954.1"/>
    <property type="RefSeq nucleotide sequence ID" value="NM_014379.4"/>
    <property type="RefSeq protein sequence ID" value="NP_055194.1"/>
</dbReference>
<dbReference type="UCSC" id="uc003ynr.5">
    <property type="organism name" value="human"/>
</dbReference>
<dbReference type="AGR" id="HGNC:18861"/>
<dbReference type="CTD" id="27012"/>
<dbReference type="DisGeNET" id="27012"/>
<dbReference type="GeneCards" id="KCNV1"/>
<dbReference type="HGNC" id="HGNC:18861">
    <property type="gene designation" value="KCNV1"/>
</dbReference>
<dbReference type="HPA" id="ENSG00000164794">
    <property type="expression patterns" value="Tissue enriched (brain)"/>
</dbReference>
<dbReference type="MIM" id="608164">
    <property type="type" value="gene"/>
</dbReference>
<dbReference type="neXtProt" id="NX_Q6PIU1"/>
<dbReference type="OpenTargets" id="ENSG00000164794"/>
<dbReference type="PharmGKB" id="PA38721"/>
<dbReference type="VEuPathDB" id="HostDB:ENSG00000164794"/>
<dbReference type="eggNOG" id="KOG3713">
    <property type="taxonomic scope" value="Eukaryota"/>
</dbReference>
<dbReference type="GeneTree" id="ENSGT00940000159740"/>
<dbReference type="HOGENOM" id="CLU_011722_4_1_1"/>
<dbReference type="InParanoid" id="Q6PIU1"/>
<dbReference type="OMA" id="SGGDEFW"/>
<dbReference type="OrthoDB" id="296522at2759"/>
<dbReference type="PAN-GO" id="Q6PIU1">
    <property type="GO annotations" value="4 GO annotations based on evolutionary models"/>
</dbReference>
<dbReference type="PhylomeDB" id="Q6PIU1"/>
<dbReference type="TreeFam" id="TF313103"/>
<dbReference type="PathwayCommons" id="Q6PIU1"/>
<dbReference type="Reactome" id="R-HSA-1296072">
    <property type="pathway name" value="Voltage gated Potassium channels"/>
</dbReference>
<dbReference type="SignaLink" id="Q6PIU1"/>
<dbReference type="BioGRID-ORCS" id="27012">
    <property type="hits" value="4 hits in 1141 CRISPR screens"/>
</dbReference>
<dbReference type="ChiTaRS" id="KCNV1">
    <property type="organism name" value="human"/>
</dbReference>
<dbReference type="GeneWiki" id="KCNV1"/>
<dbReference type="GenomeRNAi" id="27012"/>
<dbReference type="Pharos" id="Q6PIU1">
    <property type="development level" value="Tclin"/>
</dbReference>
<dbReference type="PRO" id="PR:Q6PIU1"/>
<dbReference type="Proteomes" id="UP000005640">
    <property type="component" value="Chromosome 8"/>
</dbReference>
<dbReference type="RNAct" id="Q6PIU1">
    <property type="molecule type" value="protein"/>
</dbReference>
<dbReference type="Bgee" id="ENSG00000164794">
    <property type="expression patterns" value="Expressed in buccal mucosa cell and 47 other cell types or tissues"/>
</dbReference>
<dbReference type="GO" id="GO:0045171">
    <property type="term" value="C:intercellular bridge"/>
    <property type="evidence" value="ECO:0000314"/>
    <property type="project" value="HPA"/>
</dbReference>
<dbReference type="GO" id="GO:0016020">
    <property type="term" value="C:membrane"/>
    <property type="evidence" value="ECO:0000318"/>
    <property type="project" value="GO_Central"/>
</dbReference>
<dbReference type="GO" id="GO:0005886">
    <property type="term" value="C:plasma membrane"/>
    <property type="evidence" value="ECO:0000314"/>
    <property type="project" value="HPA"/>
</dbReference>
<dbReference type="GO" id="GO:0008076">
    <property type="term" value="C:voltage-gated potassium channel complex"/>
    <property type="evidence" value="ECO:0000318"/>
    <property type="project" value="GO_Central"/>
</dbReference>
<dbReference type="GO" id="GO:0008200">
    <property type="term" value="F:ion channel inhibitor activity"/>
    <property type="evidence" value="ECO:0000304"/>
    <property type="project" value="ProtInc"/>
</dbReference>
<dbReference type="GO" id="GO:0015459">
    <property type="term" value="F:potassium channel regulator activity"/>
    <property type="evidence" value="ECO:0000318"/>
    <property type="project" value="GO_Central"/>
</dbReference>
<dbReference type="GO" id="GO:0005249">
    <property type="term" value="F:voltage-gated potassium channel activity"/>
    <property type="evidence" value="ECO:0007669"/>
    <property type="project" value="InterPro"/>
</dbReference>
<dbReference type="GO" id="GO:0001508">
    <property type="term" value="P:action potential"/>
    <property type="evidence" value="ECO:0000318"/>
    <property type="project" value="GO_Central"/>
</dbReference>
<dbReference type="GO" id="GO:0071805">
    <property type="term" value="P:potassium ion transmembrane transport"/>
    <property type="evidence" value="ECO:0000318"/>
    <property type="project" value="GO_Central"/>
</dbReference>
<dbReference type="GO" id="GO:0006813">
    <property type="term" value="P:potassium ion transport"/>
    <property type="evidence" value="ECO:0000304"/>
    <property type="project" value="ProtInc"/>
</dbReference>
<dbReference type="GO" id="GO:0051260">
    <property type="term" value="P:protein homooligomerization"/>
    <property type="evidence" value="ECO:0007669"/>
    <property type="project" value="InterPro"/>
</dbReference>
<dbReference type="FunFam" id="1.10.287.70:FF:000005">
    <property type="entry name" value="potassium voltage-gated channel subfamily G member 1"/>
    <property type="match status" value="1"/>
</dbReference>
<dbReference type="FunFam" id="1.20.120.350:FF:000044">
    <property type="entry name" value="Potassium voltage-gated channel subfamily V member 1"/>
    <property type="match status" value="1"/>
</dbReference>
<dbReference type="FunFam" id="3.30.710.10:FF:000067">
    <property type="entry name" value="Potassium voltage-gated channel subfamily V member 1"/>
    <property type="match status" value="1"/>
</dbReference>
<dbReference type="Gene3D" id="1.10.287.70">
    <property type="match status" value="1"/>
</dbReference>
<dbReference type="Gene3D" id="3.30.710.10">
    <property type="entry name" value="Potassium Channel Kv1.1, Chain A"/>
    <property type="match status" value="1"/>
</dbReference>
<dbReference type="Gene3D" id="1.20.120.350">
    <property type="entry name" value="Voltage-gated potassium channels. Chain C"/>
    <property type="match status" value="1"/>
</dbReference>
<dbReference type="InterPro" id="IPR000210">
    <property type="entry name" value="BTB/POZ_dom"/>
</dbReference>
<dbReference type="InterPro" id="IPR005821">
    <property type="entry name" value="Ion_trans_dom"/>
</dbReference>
<dbReference type="InterPro" id="IPR003968">
    <property type="entry name" value="K_chnl_volt-dep_Kv"/>
</dbReference>
<dbReference type="InterPro" id="IPR003970">
    <property type="entry name" value="K_chnl_volt-dep_Kv8.1"/>
</dbReference>
<dbReference type="InterPro" id="IPR011333">
    <property type="entry name" value="SKP1/BTB/POZ_sf"/>
</dbReference>
<dbReference type="InterPro" id="IPR003131">
    <property type="entry name" value="T1-type_BTB"/>
</dbReference>
<dbReference type="InterPro" id="IPR028325">
    <property type="entry name" value="VG_K_chnl"/>
</dbReference>
<dbReference type="InterPro" id="IPR027359">
    <property type="entry name" value="Volt_channel_dom_sf"/>
</dbReference>
<dbReference type="PANTHER" id="PTHR11537:SF38">
    <property type="entry name" value="POTASSIUM VOLTAGE-GATED CHANNEL SUBFAMILY V MEMBER 1"/>
    <property type="match status" value="1"/>
</dbReference>
<dbReference type="PANTHER" id="PTHR11537">
    <property type="entry name" value="VOLTAGE-GATED POTASSIUM CHANNEL"/>
    <property type="match status" value="1"/>
</dbReference>
<dbReference type="Pfam" id="PF02214">
    <property type="entry name" value="BTB_2"/>
    <property type="match status" value="1"/>
</dbReference>
<dbReference type="Pfam" id="PF00520">
    <property type="entry name" value="Ion_trans"/>
    <property type="match status" value="1"/>
</dbReference>
<dbReference type="PRINTS" id="PR00169">
    <property type="entry name" value="KCHANNEL"/>
</dbReference>
<dbReference type="PRINTS" id="PR01493">
    <property type="entry name" value="KV8CHANNEL"/>
</dbReference>
<dbReference type="PRINTS" id="PR01491">
    <property type="entry name" value="KVCHANNEL"/>
</dbReference>
<dbReference type="SMART" id="SM00225">
    <property type="entry name" value="BTB"/>
    <property type="match status" value="1"/>
</dbReference>
<dbReference type="SUPFAM" id="SSF54695">
    <property type="entry name" value="POZ domain"/>
    <property type="match status" value="1"/>
</dbReference>
<dbReference type="SUPFAM" id="SSF81324">
    <property type="entry name" value="Voltage-gated potassium channels"/>
    <property type="match status" value="1"/>
</dbReference>
<comment type="function">
    <text evidence="6 7">Potassium channel subunit that does not form functional channels by itself. Modulates KCNB1 and KCNB2 channel activity by shifting the threshold for inactivation to more negative values and by slowing the rate of inactivation. Can down-regulate the channel activity of KCNB1, KCNB2, KCNC4 and KCND1, possibly by trapping them in intracellular membranes.</text>
</comment>
<comment type="subunit">
    <text evidence="6 7">Heteromultimer with KCNB1 and KCNB2. Interacts with KCNC4 and KCND1.</text>
</comment>
<comment type="subcellular location">
    <subcellularLocation>
        <location evidence="6 7">Cell membrane</location>
        <topology evidence="6 7">Multi-pass membrane protein</topology>
    </subcellularLocation>
    <text>Has to be associated with another potassium channel subunit to get inserted in the plasma membrane. Remains intracellular in the absence of KCNB2.</text>
</comment>
<comment type="tissue specificity">
    <text evidence="4">Detected in brain.</text>
</comment>
<comment type="domain">
    <text evidence="1">The segment S4 is probably the voltage-sensor and is characterized by a series of positively charged amino acids at every third position.</text>
</comment>
<comment type="similarity">
    <text evidence="8">Belongs to the potassium channel family. V (TC 1.A.1.2) subfamily. Kv8.1/KCNV1 sub-subfamily.</text>
</comment>
<proteinExistence type="evidence at protein level"/>
<evidence type="ECO:0000250" key="1"/>
<evidence type="ECO:0000255" key="2"/>
<evidence type="ECO:0000256" key="3">
    <source>
        <dbReference type="SAM" id="MobiDB-lite"/>
    </source>
</evidence>
<evidence type="ECO:0000269" key="4">
    <source>
    </source>
</evidence>
<evidence type="ECO:0000269" key="5">
    <source>
    </source>
</evidence>
<evidence type="ECO:0000269" key="6">
    <source>
    </source>
</evidence>
<evidence type="ECO:0000269" key="7">
    <source>
    </source>
</evidence>
<evidence type="ECO:0000305" key="8"/>
<keyword id="KW-1003">Cell membrane</keyword>
<keyword id="KW-0407">Ion channel</keyword>
<keyword id="KW-0406">Ion transport</keyword>
<keyword id="KW-0472">Membrane</keyword>
<keyword id="KW-0630">Potassium</keyword>
<keyword id="KW-0631">Potassium channel</keyword>
<keyword id="KW-0633">Potassium transport</keyword>
<keyword id="KW-1267">Proteomics identification</keyword>
<keyword id="KW-1185">Reference proteome</keyword>
<keyword id="KW-0812">Transmembrane</keyword>
<keyword id="KW-1133">Transmembrane helix</keyword>
<keyword id="KW-0813">Transport</keyword>
<keyword id="KW-0851">Voltage-gated channel</keyword>
<protein>
    <recommendedName>
        <fullName>Potassium voltage-gated channel subfamily V member 1</fullName>
    </recommendedName>
    <alternativeName>
        <fullName>Neuronal potassium channel alpha subunit HNKA</fullName>
    </alternativeName>
    <alternativeName>
        <fullName>Voltage-gated potassium channel subunit Kv8.1</fullName>
    </alternativeName>
</protein>
<reference key="1">
    <citation type="journal article" date="1996" name="EMBO J.">
        <title>Kv8.1, a new neuronal potassium channel subunit with specific inhibitory properties towards Shab and Shaw channels.</title>
        <authorList>
            <person name="Hugnot J.-P."/>
            <person name="Salinas M."/>
            <person name="Lesage F."/>
            <person name="Guillemare E."/>
            <person name="de Weille J."/>
            <person name="Heurteaux C."/>
            <person name="Mattei M.-G."/>
            <person name="Lazdunski M."/>
        </authorList>
    </citation>
    <scope>NUCLEOTIDE SEQUENCE [MRNA]</scope>
    <scope>FUNCTION</scope>
    <scope>SUBCELLULAR LOCATION</scope>
    <scope>INTERACTION WITH KCNB1; KCNB2; KCNC4 AND KCND1</scope>
</reference>
<reference key="2">
    <citation type="journal article" date="2002" name="Epilepsia">
        <title>Positional candidate approach for the gene responsible for benign adult familial myoclonic epilepsy.</title>
        <authorList>
            <person name="Sano A."/>
            <person name="Mikami M."/>
            <person name="Nakamura M."/>
            <person name="Ueno S."/>
            <person name="Tanabe H."/>
            <person name="Kaneko S."/>
        </authorList>
    </citation>
    <scope>NUCLEOTIDE SEQUENCE [GENOMIC DNA]</scope>
    <scope>TISSUE SPECIFICITY</scope>
</reference>
<reference key="3">
    <citation type="submission" date="1999-12" db="EMBL/GenBank/DDBJ databases">
        <title>Molecular cloning of human neuronal potassium channel alpha subunit (HNKA).</title>
        <authorList>
            <person name="Xia J.-H."/>
            <person name="Zheng D."/>
            <person name="Tang X.-X."/>
            <person name="Yu K.-P."/>
            <person name="Tan S."/>
        </authorList>
    </citation>
    <scope>NUCLEOTIDE SEQUENCE [MRNA]</scope>
    <source>
        <tissue>Kidney</tissue>
    </source>
</reference>
<reference key="4">
    <citation type="journal article" date="2004" name="Genome Res.">
        <title>The status, quality, and expansion of the NIH full-length cDNA project: the Mammalian Gene Collection (MGC).</title>
        <authorList>
            <consortium name="The MGC Project Team"/>
        </authorList>
    </citation>
    <scope>NUCLEOTIDE SEQUENCE [LARGE SCALE MRNA]</scope>
    <scope>VARIANT GLY-22</scope>
    <source>
        <tissue>Brain</tissue>
    </source>
</reference>
<reference key="5">
    <citation type="journal article" date="1997" name="J. Biol. Chem.">
        <title>Modes of regulation of shab K+ channel activity by the Kv8.1 subunit.</title>
        <authorList>
            <person name="Salinas M."/>
            <person name="de Weille J."/>
            <person name="Guillemare E."/>
            <person name="Lazdunski M."/>
            <person name="Hugnot J.-P."/>
        </authorList>
    </citation>
    <scope>FUNCTION</scope>
    <scope>SUBCELLULAR LOCATION</scope>
    <scope>INTERACTION WITH KCNB1 AND KCNB2</scope>
</reference>
<accession>Q6PIU1</accession>
<accession>Q9UHJ4</accession>
<sequence length="500" mass="56304">MPSSGRALLDSPLDSGSLTSLDSSVFCSEGEGEPLALGDCFTVNVGGSRFVLSQQALSCFPHTRLGKLAVVVASYRRPGALAAVPSPLELCDDANPVDNEYFFDRSSQAFRYVLHYYRTGRLHVMEQLCALSFLQEIQYWGIDELSIDSCCRDRYFRRKELSETLDFKKDTEDQESQHESEQDFSQGPCPTVRQKLWNILEKPGSSTAARIFGVISIIFVVVSIINMALMSAELSWLDLQLLEILEYVCISWFTGEFVLRFLCVRDRCRFLRKVPNIIDLLAILPFYITLLVESLSGSQTTQELENVGRIVQVLRLLRALRMLKLGRHSTGLRSLGMTITQCYEEVGLLLLFLSVGISIFSTVEYFAEQSIPDTTFTSVPCAWWWATTSMTTVGYGDIRPDTTTGKIVAFMCILSGILVLALPIAIINDRFSACYFTLKLKEAAVRQREALKKLTKNIATDSYISVNLRDVYARSIMEMLRLKGRERASTRSSGGDDFWF</sequence>